<proteinExistence type="inferred from homology"/>
<keyword id="KW-0150">Chloroplast</keyword>
<keyword id="KW-0934">Plastid</keyword>
<keyword id="KW-0687">Ribonucleoprotein</keyword>
<keyword id="KW-0689">Ribosomal protein</keyword>
<comment type="subcellular location">
    <subcellularLocation>
        <location>Plastid</location>
        <location>Chloroplast</location>
    </subcellularLocation>
</comment>
<comment type="similarity">
    <text evidence="1">Belongs to the universal ribosomal protein uS2 family.</text>
</comment>
<name>RR2_CHLSC</name>
<evidence type="ECO:0000305" key="1"/>
<reference key="1">
    <citation type="journal article" date="2007" name="Mol. Phylogenet. Evol.">
        <title>Phylogenetic and evolutionary implications of complete chloroplast genome sequences of four early-diverging angiosperms: Buxus (Buxaceae), Chloranthus (Chloranthaceae), Dioscorea (Dioscoreaceae), and Illicium (Schisandraceae).</title>
        <authorList>
            <person name="Hansen D.R."/>
            <person name="Dastidar S.G."/>
            <person name="Cai Z."/>
            <person name="Penaflor C."/>
            <person name="Kuehl J.V."/>
            <person name="Boore J.L."/>
            <person name="Jansen R.K."/>
        </authorList>
    </citation>
    <scope>NUCLEOTIDE SEQUENCE [LARGE SCALE GENOMIC DNA]</scope>
</reference>
<organism>
    <name type="scientific">Chloranthus spicatus</name>
    <name type="common">Chulantree</name>
    <name type="synonym">Nigrina spicata</name>
    <dbReference type="NCBI Taxonomy" id="13006"/>
    <lineage>
        <taxon>Eukaryota</taxon>
        <taxon>Viridiplantae</taxon>
        <taxon>Streptophyta</taxon>
        <taxon>Embryophyta</taxon>
        <taxon>Tracheophyta</taxon>
        <taxon>Spermatophyta</taxon>
        <taxon>Magnoliopsida</taxon>
        <taxon>Chloranthales</taxon>
        <taxon>Chloranthaceae</taxon>
        <taxon>Chloranthus</taxon>
    </lineage>
</organism>
<protein>
    <recommendedName>
        <fullName evidence="1">Small ribosomal subunit protein uS2c</fullName>
    </recommendedName>
    <alternativeName>
        <fullName>30S ribosomal protein S2, chloroplastic</fullName>
    </alternativeName>
</protein>
<feature type="chain" id="PRO_0000352100" description="Small ribosomal subunit protein uS2c">
    <location>
        <begin position="1"/>
        <end position="236"/>
    </location>
</feature>
<geneLocation type="chloroplast"/>
<accession>A6MMB1</accession>
<gene>
    <name type="primary">rps2</name>
</gene>
<dbReference type="EMBL" id="EF380352">
    <property type="protein sequence ID" value="ABQ43249.1"/>
    <property type="molecule type" value="Genomic_DNA"/>
</dbReference>
<dbReference type="RefSeq" id="YP_001294087.1">
    <property type="nucleotide sequence ID" value="NC_009598.1"/>
</dbReference>
<dbReference type="SMR" id="A6MMB1"/>
<dbReference type="GeneID" id="5236550"/>
<dbReference type="GO" id="GO:0009507">
    <property type="term" value="C:chloroplast"/>
    <property type="evidence" value="ECO:0007669"/>
    <property type="project" value="UniProtKB-SubCell"/>
</dbReference>
<dbReference type="GO" id="GO:0005763">
    <property type="term" value="C:mitochondrial small ribosomal subunit"/>
    <property type="evidence" value="ECO:0007669"/>
    <property type="project" value="TreeGrafter"/>
</dbReference>
<dbReference type="GO" id="GO:0003735">
    <property type="term" value="F:structural constituent of ribosome"/>
    <property type="evidence" value="ECO:0007669"/>
    <property type="project" value="InterPro"/>
</dbReference>
<dbReference type="GO" id="GO:0006412">
    <property type="term" value="P:translation"/>
    <property type="evidence" value="ECO:0007669"/>
    <property type="project" value="UniProtKB-UniRule"/>
</dbReference>
<dbReference type="CDD" id="cd01425">
    <property type="entry name" value="RPS2"/>
    <property type="match status" value="1"/>
</dbReference>
<dbReference type="FunFam" id="3.40.50.10490:FF:000101">
    <property type="match status" value="1"/>
</dbReference>
<dbReference type="FunFam" id="1.10.287.610:FF:000001">
    <property type="entry name" value="30S ribosomal protein S2"/>
    <property type="match status" value="1"/>
</dbReference>
<dbReference type="Gene3D" id="3.40.50.10490">
    <property type="entry name" value="Glucose-6-phosphate isomerase like protein, domain 1"/>
    <property type="match status" value="1"/>
</dbReference>
<dbReference type="Gene3D" id="1.10.287.610">
    <property type="entry name" value="Helix hairpin bin"/>
    <property type="match status" value="1"/>
</dbReference>
<dbReference type="HAMAP" id="MF_00291_B">
    <property type="entry name" value="Ribosomal_uS2_B"/>
    <property type="match status" value="1"/>
</dbReference>
<dbReference type="InterPro" id="IPR001865">
    <property type="entry name" value="Ribosomal_uS2"/>
</dbReference>
<dbReference type="InterPro" id="IPR005706">
    <property type="entry name" value="Ribosomal_uS2_bac/mit/plastid"/>
</dbReference>
<dbReference type="InterPro" id="IPR018130">
    <property type="entry name" value="Ribosomal_uS2_CS"/>
</dbReference>
<dbReference type="InterPro" id="IPR023591">
    <property type="entry name" value="Ribosomal_uS2_flav_dom_sf"/>
</dbReference>
<dbReference type="NCBIfam" id="TIGR01011">
    <property type="entry name" value="rpsB_bact"/>
    <property type="match status" value="1"/>
</dbReference>
<dbReference type="PANTHER" id="PTHR12534">
    <property type="entry name" value="30S RIBOSOMAL PROTEIN S2 PROKARYOTIC AND ORGANELLAR"/>
    <property type="match status" value="1"/>
</dbReference>
<dbReference type="PANTHER" id="PTHR12534:SF0">
    <property type="entry name" value="SMALL RIBOSOMAL SUBUNIT PROTEIN US2M"/>
    <property type="match status" value="1"/>
</dbReference>
<dbReference type="Pfam" id="PF00318">
    <property type="entry name" value="Ribosomal_S2"/>
    <property type="match status" value="1"/>
</dbReference>
<dbReference type="PRINTS" id="PR00395">
    <property type="entry name" value="RIBOSOMALS2"/>
</dbReference>
<dbReference type="SUPFAM" id="SSF52313">
    <property type="entry name" value="Ribosomal protein S2"/>
    <property type="match status" value="1"/>
</dbReference>
<dbReference type="PROSITE" id="PS00962">
    <property type="entry name" value="RIBOSOMAL_S2_1"/>
    <property type="match status" value="1"/>
</dbReference>
<dbReference type="PROSITE" id="PS00963">
    <property type="entry name" value="RIBOSOMAL_S2_2"/>
    <property type="match status" value="1"/>
</dbReference>
<sequence length="236" mass="26645">MTRRYWNINLEEMMEAGVHFGHGTRKWNPRMAPYISAKRKGIHITNLTRTARFLSEACDLVFDAASSGKHFLIVGTKNKAADSVASAAIRARCHYVNKKWLGGMSTNWSTTETRLQKFRDLRAEQKMGRLNRLPKRDAAMLKRQLSRLQTYLGGIKYMTGLPDIVIIVDQQEEYTALRECVTLGIPTICLIDTNCDPDLADISIPANDDAIASIRLILNKLVSAICEGRSGYIRNR</sequence>